<keyword id="KW-0030">Aminoacyl-tRNA synthetase</keyword>
<keyword id="KW-0067">ATP-binding</keyword>
<keyword id="KW-0963">Cytoplasm</keyword>
<keyword id="KW-0436">Ligase</keyword>
<keyword id="KW-0547">Nucleotide-binding</keyword>
<keyword id="KW-0648">Protein biosynthesis</keyword>
<keyword id="KW-1185">Reference proteome</keyword>
<dbReference type="EC" id="6.1.1.22" evidence="1"/>
<dbReference type="EMBL" id="CP000253">
    <property type="protein sequence ID" value="ABD30556.1"/>
    <property type="molecule type" value="Genomic_DNA"/>
</dbReference>
<dbReference type="RefSeq" id="WP_000858789.1">
    <property type="nucleotide sequence ID" value="NZ_LS483365.1"/>
</dbReference>
<dbReference type="SMR" id="Q2FYH6"/>
<dbReference type="STRING" id="93061.SAOUHSC_01471"/>
<dbReference type="PaxDb" id="1280-SAXN108_1477"/>
<dbReference type="KEGG" id="sao:SAOUHSC_01471"/>
<dbReference type="PATRIC" id="fig|93061.5.peg.1340"/>
<dbReference type="eggNOG" id="COG0017">
    <property type="taxonomic scope" value="Bacteria"/>
</dbReference>
<dbReference type="HOGENOM" id="CLU_004553_2_0_9"/>
<dbReference type="OrthoDB" id="9762036at2"/>
<dbReference type="PRO" id="PR:Q2FYH6"/>
<dbReference type="Proteomes" id="UP000008816">
    <property type="component" value="Chromosome"/>
</dbReference>
<dbReference type="GO" id="GO:0005737">
    <property type="term" value="C:cytoplasm"/>
    <property type="evidence" value="ECO:0007669"/>
    <property type="project" value="UniProtKB-SubCell"/>
</dbReference>
<dbReference type="GO" id="GO:0004816">
    <property type="term" value="F:asparagine-tRNA ligase activity"/>
    <property type="evidence" value="ECO:0007669"/>
    <property type="project" value="UniProtKB-UniRule"/>
</dbReference>
<dbReference type="GO" id="GO:0005524">
    <property type="term" value="F:ATP binding"/>
    <property type="evidence" value="ECO:0007669"/>
    <property type="project" value="UniProtKB-UniRule"/>
</dbReference>
<dbReference type="GO" id="GO:0140096">
    <property type="term" value="F:catalytic activity, acting on a protein"/>
    <property type="evidence" value="ECO:0007669"/>
    <property type="project" value="UniProtKB-ARBA"/>
</dbReference>
<dbReference type="GO" id="GO:0003676">
    <property type="term" value="F:nucleic acid binding"/>
    <property type="evidence" value="ECO:0007669"/>
    <property type="project" value="InterPro"/>
</dbReference>
<dbReference type="GO" id="GO:0016740">
    <property type="term" value="F:transferase activity"/>
    <property type="evidence" value="ECO:0007669"/>
    <property type="project" value="UniProtKB-ARBA"/>
</dbReference>
<dbReference type="GO" id="GO:0006421">
    <property type="term" value="P:asparaginyl-tRNA aminoacylation"/>
    <property type="evidence" value="ECO:0000318"/>
    <property type="project" value="GO_Central"/>
</dbReference>
<dbReference type="CDD" id="cd04323">
    <property type="entry name" value="AsnRS_cyto_like_N"/>
    <property type="match status" value="1"/>
</dbReference>
<dbReference type="CDD" id="cd00776">
    <property type="entry name" value="AsxRS_core"/>
    <property type="match status" value="1"/>
</dbReference>
<dbReference type="Gene3D" id="3.30.930.10">
    <property type="entry name" value="Bira Bifunctional Protein, Domain 2"/>
    <property type="match status" value="1"/>
</dbReference>
<dbReference type="Gene3D" id="2.40.50.140">
    <property type="entry name" value="Nucleic acid-binding proteins"/>
    <property type="match status" value="1"/>
</dbReference>
<dbReference type="HAMAP" id="MF_00534">
    <property type="entry name" value="Asn_tRNA_synth"/>
    <property type="match status" value="1"/>
</dbReference>
<dbReference type="InterPro" id="IPR004364">
    <property type="entry name" value="Aa-tRNA-synt_II"/>
</dbReference>
<dbReference type="InterPro" id="IPR006195">
    <property type="entry name" value="aa-tRNA-synth_II"/>
</dbReference>
<dbReference type="InterPro" id="IPR045864">
    <property type="entry name" value="aa-tRNA-synth_II/BPL/LPL"/>
</dbReference>
<dbReference type="InterPro" id="IPR004522">
    <property type="entry name" value="Asn-tRNA-ligase"/>
</dbReference>
<dbReference type="InterPro" id="IPR002312">
    <property type="entry name" value="Asp/Asn-tRNA-synth_IIb"/>
</dbReference>
<dbReference type="InterPro" id="IPR012340">
    <property type="entry name" value="NA-bd_OB-fold"/>
</dbReference>
<dbReference type="InterPro" id="IPR004365">
    <property type="entry name" value="NA-bd_OB_tRNA"/>
</dbReference>
<dbReference type="NCBIfam" id="TIGR00457">
    <property type="entry name" value="asnS"/>
    <property type="match status" value="1"/>
</dbReference>
<dbReference type="NCBIfam" id="NF003037">
    <property type="entry name" value="PRK03932.1"/>
    <property type="match status" value="1"/>
</dbReference>
<dbReference type="NCBIfam" id="NF003483">
    <property type="entry name" value="PRK05159.1"/>
    <property type="match status" value="1"/>
</dbReference>
<dbReference type="PANTHER" id="PTHR22594:SF34">
    <property type="entry name" value="ASPARAGINE--TRNA LIGASE, MITOCHONDRIAL-RELATED"/>
    <property type="match status" value="1"/>
</dbReference>
<dbReference type="PANTHER" id="PTHR22594">
    <property type="entry name" value="ASPARTYL/LYSYL-TRNA SYNTHETASE"/>
    <property type="match status" value="1"/>
</dbReference>
<dbReference type="Pfam" id="PF00152">
    <property type="entry name" value="tRNA-synt_2"/>
    <property type="match status" value="1"/>
</dbReference>
<dbReference type="Pfam" id="PF01336">
    <property type="entry name" value="tRNA_anti-codon"/>
    <property type="match status" value="1"/>
</dbReference>
<dbReference type="PRINTS" id="PR01042">
    <property type="entry name" value="TRNASYNTHASP"/>
</dbReference>
<dbReference type="SUPFAM" id="SSF55681">
    <property type="entry name" value="Class II aaRS and biotin synthetases"/>
    <property type="match status" value="1"/>
</dbReference>
<dbReference type="SUPFAM" id="SSF50249">
    <property type="entry name" value="Nucleic acid-binding proteins"/>
    <property type="match status" value="1"/>
</dbReference>
<dbReference type="PROSITE" id="PS50862">
    <property type="entry name" value="AA_TRNA_LIGASE_II"/>
    <property type="match status" value="1"/>
</dbReference>
<sequence length="430" mass="49158">MKTTIKQAKDHLNQDVTIGAWLTNKRSSGKIAFLQLRDGTGFMQGVVVKSEVDEEVFKLAKEITQESSLYVTGTITEDNRSDLGYEMQVKSIEVISEAHDYPITPKNHGTEFLMDHRHLWLRSKKQHAVMKIRNEVIRATYEFFNKDGFTKVDPPILTASAPEGTSELFHTKYFDQDAFLSQSGQLYLEAAAMAHGKVFSFGPTFRAEKSKTRRHLIEFWMIEGEMAFTNHAESLEIQEQYVTHVVKSVLENCKLELKILERDTSKLEKVATPFPRISYDDAIEFLKAEGFDDIEWGEDFGAPHETAIANHYDLPVFITNYPTKIKPFYMQPNPENEETVLCADLIAPEGYGEIIGGSERVDDLELLEQRVKEHGLDEEAYSYYLDLRRYGSVPHCGFGLGLERTVAWISGVEHVRETAPFPRLLNRLYP</sequence>
<protein>
    <recommendedName>
        <fullName evidence="1">Asparagine--tRNA ligase</fullName>
        <ecNumber evidence="1">6.1.1.22</ecNumber>
    </recommendedName>
    <alternativeName>
        <fullName evidence="1">Asparaginyl-tRNA synthetase</fullName>
        <shortName evidence="1">AsnRS</shortName>
    </alternativeName>
</protein>
<comment type="catalytic activity">
    <reaction evidence="1">
        <text>tRNA(Asn) + L-asparagine + ATP = L-asparaginyl-tRNA(Asn) + AMP + diphosphate + H(+)</text>
        <dbReference type="Rhea" id="RHEA:11180"/>
        <dbReference type="Rhea" id="RHEA-COMP:9659"/>
        <dbReference type="Rhea" id="RHEA-COMP:9674"/>
        <dbReference type="ChEBI" id="CHEBI:15378"/>
        <dbReference type="ChEBI" id="CHEBI:30616"/>
        <dbReference type="ChEBI" id="CHEBI:33019"/>
        <dbReference type="ChEBI" id="CHEBI:58048"/>
        <dbReference type="ChEBI" id="CHEBI:78442"/>
        <dbReference type="ChEBI" id="CHEBI:78515"/>
        <dbReference type="ChEBI" id="CHEBI:456215"/>
        <dbReference type="EC" id="6.1.1.22"/>
    </reaction>
</comment>
<comment type="subunit">
    <text evidence="1">Homodimer.</text>
</comment>
<comment type="subcellular location">
    <subcellularLocation>
        <location evidence="1">Cytoplasm</location>
    </subcellularLocation>
</comment>
<comment type="similarity">
    <text evidence="1">Belongs to the class-II aminoacyl-tRNA synthetase family.</text>
</comment>
<accession>Q2FYH6</accession>
<proteinExistence type="inferred from homology"/>
<reference key="1">
    <citation type="book" date="2006" name="Gram positive pathogens, 2nd edition">
        <title>The Staphylococcus aureus NCTC 8325 genome.</title>
        <editorList>
            <person name="Fischetti V."/>
            <person name="Novick R."/>
            <person name="Ferretti J."/>
            <person name="Portnoy D."/>
            <person name="Rood J."/>
        </editorList>
        <authorList>
            <person name="Gillaspy A.F."/>
            <person name="Worrell V."/>
            <person name="Orvis J."/>
            <person name="Roe B.A."/>
            <person name="Dyer D.W."/>
            <person name="Iandolo J.J."/>
        </authorList>
    </citation>
    <scope>NUCLEOTIDE SEQUENCE [LARGE SCALE GENOMIC DNA]</scope>
    <source>
        <strain>NCTC 8325 / PS 47</strain>
    </source>
</reference>
<evidence type="ECO:0000255" key="1">
    <source>
        <dbReference type="HAMAP-Rule" id="MF_00534"/>
    </source>
</evidence>
<gene>
    <name evidence="1" type="primary">asnS</name>
    <name type="ordered locus">SAOUHSC_01471</name>
</gene>
<name>SYN_STAA8</name>
<organism>
    <name type="scientific">Staphylococcus aureus (strain NCTC 8325 / PS 47)</name>
    <dbReference type="NCBI Taxonomy" id="93061"/>
    <lineage>
        <taxon>Bacteria</taxon>
        <taxon>Bacillati</taxon>
        <taxon>Bacillota</taxon>
        <taxon>Bacilli</taxon>
        <taxon>Bacillales</taxon>
        <taxon>Staphylococcaceae</taxon>
        <taxon>Staphylococcus</taxon>
    </lineage>
</organism>
<feature type="chain" id="PRO_1000051438" description="Asparagine--tRNA ligase">
    <location>
        <begin position="1"/>
        <end position="430"/>
    </location>
</feature>